<organism>
    <name type="scientific">Xenopus laevis</name>
    <name type="common">African clawed frog</name>
    <dbReference type="NCBI Taxonomy" id="8355"/>
    <lineage>
        <taxon>Eukaryota</taxon>
        <taxon>Metazoa</taxon>
        <taxon>Chordata</taxon>
        <taxon>Craniata</taxon>
        <taxon>Vertebrata</taxon>
        <taxon>Euteleostomi</taxon>
        <taxon>Amphibia</taxon>
        <taxon>Batrachia</taxon>
        <taxon>Anura</taxon>
        <taxon>Pipoidea</taxon>
        <taxon>Pipidae</taxon>
        <taxon>Xenopodinae</taxon>
        <taxon>Xenopus</taxon>
        <taxon>Xenopus</taxon>
    </lineage>
</organism>
<accession>Q68EU6</accession>
<proteinExistence type="evidence at transcript level"/>
<keyword id="KW-0472">Membrane</keyword>
<keyword id="KW-1185">Reference proteome</keyword>
<keyword id="KW-0812">Transmembrane</keyword>
<keyword id="KW-1133">Transmembrane helix</keyword>
<protein>
    <recommendedName>
        <fullName>Major facilitator superfamily domain-containing protein 6-like protein A</fullName>
    </recommendedName>
</protein>
<sequence length="609" mass="68314">MSSTKQWDISKALTVATLFYFFHNVGKFCLMPFLTLYFRQLGLGAPLVGIIFGFKHAVHLLWAPLCSFLAKNHHKQRFFIMTSLLLSAGVGSLFAYYPPLDKNIVSLFCNTSMPWKEQLNPPIDISVSVDENLNTTYAAPTDHQTTTGALNTLPSSVGKLATDPAMTSLDLEITTHQRFTDQFPVTSNTILEHQTKNVLGSGKAQKVMSSKSAASNSKQRSSLNNHTSPYATHPNVSHHPSIHERKVRDIGIDFTDNSLDPQHKIFLIVLVLVIIWEILAAPLEWIADDSLYEYLDFVDATDRHGKLWIWGYLGASMGSIFITFLVDNLNCFVIYDIPRVFFHFFCYGGFLIGTLFLSTLYPIHVSKKTEHSNKTVKALGFLGSDGRIVLTALTVFLLGAVGSTTQNFLFWQMQDVGSSELYMGLSIAVGLLSELTLYFFRNKLLKIFTFKWMVALGLFSLGVQCLYYSFLWAPWSVLAIQILNAFSSGVIWWAINSQVVDLASPGTERSLQLALRWLAYGCGSSTGSFASGFIISRFSLAVLYQACCITLLLWIIIFLLVQPKLPNTKKINYSRLLAADNSDMSDSDEEQDRDWLVTAMKDENSNRNW</sequence>
<evidence type="ECO:0000255" key="1"/>
<evidence type="ECO:0000256" key="2">
    <source>
        <dbReference type="SAM" id="MobiDB-lite"/>
    </source>
</evidence>
<evidence type="ECO:0000305" key="3"/>
<gene>
    <name type="primary">mfsd6l-a</name>
</gene>
<dbReference type="EMBL" id="BC080104">
    <property type="protein sequence ID" value="AAH80104.1"/>
    <property type="molecule type" value="mRNA"/>
</dbReference>
<dbReference type="RefSeq" id="NP_001087560.1">
    <property type="nucleotide sequence ID" value="NM_001094091.1"/>
</dbReference>
<dbReference type="RefSeq" id="XP_018093026.1">
    <property type="nucleotide sequence ID" value="XM_018237537.1"/>
</dbReference>
<dbReference type="RefSeq" id="XP_018093027.1">
    <property type="nucleotide sequence ID" value="XM_018237538.1"/>
</dbReference>
<dbReference type="DNASU" id="447384"/>
<dbReference type="GeneID" id="447384"/>
<dbReference type="KEGG" id="xla:447384"/>
<dbReference type="AGR" id="Xenbase:XB-GENE-5841523"/>
<dbReference type="CTD" id="447384"/>
<dbReference type="Xenbase" id="XB-GENE-5841523">
    <property type="gene designation" value="mfsd6l.S"/>
</dbReference>
<dbReference type="OMA" id="EGLQWTF"/>
<dbReference type="OrthoDB" id="515887at2759"/>
<dbReference type="Proteomes" id="UP000186698">
    <property type="component" value="Chromosome 9_10S"/>
</dbReference>
<dbReference type="Bgee" id="447384">
    <property type="expression patterns" value="Expressed in oocyte and 19 other cell types or tissues"/>
</dbReference>
<dbReference type="GO" id="GO:0016020">
    <property type="term" value="C:membrane"/>
    <property type="evidence" value="ECO:0000318"/>
    <property type="project" value="GO_Central"/>
</dbReference>
<dbReference type="CDD" id="cd17479">
    <property type="entry name" value="MFS_MFSD6L"/>
    <property type="match status" value="1"/>
</dbReference>
<dbReference type="Gene3D" id="1.20.1250.20">
    <property type="entry name" value="MFS general substrate transporter like domains"/>
    <property type="match status" value="2"/>
</dbReference>
<dbReference type="InterPro" id="IPR024989">
    <property type="entry name" value="MFS_assoc_dom"/>
</dbReference>
<dbReference type="InterPro" id="IPR051717">
    <property type="entry name" value="MFS_MFSD6"/>
</dbReference>
<dbReference type="InterPro" id="IPR036259">
    <property type="entry name" value="MFS_trans_sf"/>
</dbReference>
<dbReference type="PANTHER" id="PTHR16172">
    <property type="entry name" value="MAJOR FACILITATOR SUPERFAMILY DOMAIN-CONTAINING PROTEIN 6-LIKE"/>
    <property type="match status" value="1"/>
</dbReference>
<dbReference type="PANTHER" id="PTHR16172:SF41">
    <property type="entry name" value="MAJOR FACILITATOR SUPERFAMILY DOMAIN-CONTAINING PROTEIN 6-LIKE"/>
    <property type="match status" value="1"/>
</dbReference>
<dbReference type="Pfam" id="PF12832">
    <property type="entry name" value="MFS_1_like"/>
    <property type="match status" value="1"/>
</dbReference>
<dbReference type="SUPFAM" id="SSF103473">
    <property type="entry name" value="MFS general substrate transporter"/>
    <property type="match status" value="1"/>
</dbReference>
<comment type="subcellular location">
    <subcellularLocation>
        <location evidence="3">Membrane</location>
        <topology evidence="3">Multi-pass membrane protein</topology>
    </subcellularLocation>
</comment>
<comment type="similarity">
    <text evidence="3">Belongs to the major facilitator superfamily. MFSD6 family.</text>
</comment>
<feature type="chain" id="PRO_0000321947" description="Major facilitator superfamily domain-containing protein 6-like protein A">
    <location>
        <begin position="1"/>
        <end position="609"/>
    </location>
</feature>
<feature type="transmembrane region" description="Helical" evidence="1">
    <location>
        <begin position="41"/>
        <end position="61"/>
    </location>
</feature>
<feature type="transmembrane region" description="Helical" evidence="1">
    <location>
        <begin position="78"/>
        <end position="98"/>
    </location>
</feature>
<feature type="transmembrane region" description="Helical" evidence="1">
    <location>
        <begin position="265"/>
        <end position="285"/>
    </location>
</feature>
<feature type="transmembrane region" description="Helical" evidence="1">
    <location>
        <begin position="307"/>
        <end position="327"/>
    </location>
</feature>
<feature type="transmembrane region" description="Helical" evidence="1">
    <location>
        <begin position="340"/>
        <end position="360"/>
    </location>
</feature>
<feature type="transmembrane region" description="Helical" evidence="1">
    <location>
        <begin position="388"/>
        <end position="408"/>
    </location>
</feature>
<feature type="transmembrane region" description="Helical" evidence="1">
    <location>
        <begin position="420"/>
        <end position="440"/>
    </location>
</feature>
<feature type="transmembrane region" description="Helical" evidence="1">
    <location>
        <begin position="452"/>
        <end position="472"/>
    </location>
</feature>
<feature type="transmembrane region" description="Helical" evidence="1">
    <location>
        <begin position="475"/>
        <end position="495"/>
    </location>
</feature>
<feature type="transmembrane region" description="Helical" evidence="1">
    <location>
        <begin position="513"/>
        <end position="535"/>
    </location>
</feature>
<feature type="transmembrane region" description="Helical" evidence="1">
    <location>
        <begin position="541"/>
        <end position="561"/>
    </location>
</feature>
<feature type="region of interest" description="Disordered" evidence="2">
    <location>
        <begin position="201"/>
        <end position="241"/>
    </location>
</feature>
<feature type="compositionally biased region" description="Polar residues" evidence="2">
    <location>
        <begin position="207"/>
        <end position="230"/>
    </location>
</feature>
<reference key="1">
    <citation type="submission" date="2004-08" db="EMBL/GenBank/DDBJ databases">
        <authorList>
            <consortium name="NIH - Xenopus Gene Collection (XGC) project"/>
        </authorList>
    </citation>
    <scope>NUCLEOTIDE SEQUENCE [LARGE SCALE MRNA]</scope>
    <source>
        <tissue>Brain</tissue>
    </source>
</reference>
<name>MF6LA_XENLA</name>